<accession>Q81QB6</accession>
<accession>Q6HYJ3</accession>
<accession>Q6KSJ4</accession>
<comment type="function">
    <text evidence="1">Catalyzes the oxidation of malonate semialdehyde (MSA) and methylmalonate semialdehyde (MMSA) into acetyl-CoA and propanoyl-CoA, respectively. Is involved in a myo-inositol catabolic pathway. Bicarbonate, and not CO2, is the end-product of the enzymatic reaction.</text>
</comment>
<comment type="catalytic activity">
    <reaction evidence="1">
        <text>3-oxopropanoate + NAD(+) + CoA + H2O = hydrogencarbonate + acetyl-CoA + NADH + H(+)</text>
        <dbReference type="Rhea" id="RHEA:76615"/>
        <dbReference type="ChEBI" id="CHEBI:15377"/>
        <dbReference type="ChEBI" id="CHEBI:15378"/>
        <dbReference type="ChEBI" id="CHEBI:17544"/>
        <dbReference type="ChEBI" id="CHEBI:33190"/>
        <dbReference type="ChEBI" id="CHEBI:57287"/>
        <dbReference type="ChEBI" id="CHEBI:57288"/>
        <dbReference type="ChEBI" id="CHEBI:57540"/>
        <dbReference type="ChEBI" id="CHEBI:57945"/>
        <dbReference type="EC" id="1.2.1.27"/>
    </reaction>
    <physiologicalReaction direction="left-to-right" evidence="1">
        <dbReference type="Rhea" id="RHEA:76616"/>
    </physiologicalReaction>
</comment>
<comment type="catalytic activity">
    <reaction evidence="1">
        <text>2-methyl-3-oxopropanoate + NAD(+) + CoA + H2O = propanoyl-CoA + hydrogencarbonate + NADH + H(+)</text>
        <dbReference type="Rhea" id="RHEA:20804"/>
        <dbReference type="ChEBI" id="CHEBI:15377"/>
        <dbReference type="ChEBI" id="CHEBI:15378"/>
        <dbReference type="ChEBI" id="CHEBI:17544"/>
        <dbReference type="ChEBI" id="CHEBI:57287"/>
        <dbReference type="ChEBI" id="CHEBI:57392"/>
        <dbReference type="ChEBI" id="CHEBI:57540"/>
        <dbReference type="ChEBI" id="CHEBI:57700"/>
        <dbReference type="ChEBI" id="CHEBI:57945"/>
        <dbReference type="EC" id="1.2.1.27"/>
    </reaction>
    <physiologicalReaction direction="left-to-right" evidence="1">
        <dbReference type="Rhea" id="RHEA:20805"/>
    </physiologicalReaction>
</comment>
<comment type="pathway">
    <text evidence="1">Polyol metabolism; myo-inositol degradation into acetyl-CoA; acetyl-CoA from myo-inositol: step 7/7.</text>
</comment>
<comment type="subunit">
    <text evidence="1">Homotetramer.</text>
</comment>
<comment type="similarity">
    <text evidence="1">Belongs to the aldehyde dehydrogenase family. IolA subfamily.</text>
</comment>
<organism>
    <name type="scientific">Bacillus anthracis</name>
    <dbReference type="NCBI Taxonomy" id="1392"/>
    <lineage>
        <taxon>Bacteria</taxon>
        <taxon>Bacillati</taxon>
        <taxon>Bacillota</taxon>
        <taxon>Bacilli</taxon>
        <taxon>Bacillales</taxon>
        <taxon>Bacillaceae</taxon>
        <taxon>Bacillus</taxon>
        <taxon>Bacillus cereus group</taxon>
    </lineage>
</organism>
<feature type="chain" id="PRO_0000352319" description="Malonate-semialdehyde dehydrogenase 2">
    <location>
        <begin position="1"/>
        <end position="487"/>
    </location>
</feature>
<feature type="active site" description="Nucleophile" evidence="1">
    <location>
        <position position="286"/>
    </location>
</feature>
<feature type="binding site" evidence="1">
    <location>
        <position position="154"/>
    </location>
    <ligand>
        <name>NAD(+)</name>
        <dbReference type="ChEBI" id="CHEBI:57540"/>
    </ligand>
</feature>
<feature type="binding site" evidence="1">
    <location>
        <position position="178"/>
    </location>
    <ligand>
        <name>NAD(+)</name>
        <dbReference type="ChEBI" id="CHEBI:57540"/>
    </ligand>
</feature>
<feature type="binding site" evidence="1">
    <location>
        <position position="181"/>
    </location>
    <ligand>
        <name>NAD(+)</name>
        <dbReference type="ChEBI" id="CHEBI:57540"/>
    </ligand>
</feature>
<feature type="binding site" evidence="1">
    <location>
        <position position="182"/>
    </location>
    <ligand>
        <name>NAD(+)</name>
        <dbReference type="ChEBI" id="CHEBI:57540"/>
    </ligand>
</feature>
<feature type="binding site" evidence="1">
    <location>
        <position position="231"/>
    </location>
    <ligand>
        <name>NAD(+)</name>
        <dbReference type="ChEBI" id="CHEBI:57540"/>
    </ligand>
</feature>
<feature type="binding site" evidence="1">
    <location>
        <position position="386"/>
    </location>
    <ligand>
        <name>NAD(+)</name>
        <dbReference type="ChEBI" id="CHEBI:57540"/>
    </ligand>
</feature>
<name>IOLA2_BACAN</name>
<dbReference type="EC" id="1.2.1.27" evidence="1"/>
<dbReference type="EMBL" id="AE016879">
    <property type="protein sequence ID" value="AAP26371.1"/>
    <property type="molecule type" value="Genomic_DNA"/>
</dbReference>
<dbReference type="EMBL" id="AE017334">
    <property type="protein sequence ID" value="AAT31624.1"/>
    <property type="molecule type" value="Genomic_DNA"/>
</dbReference>
<dbReference type="EMBL" id="AE017225">
    <property type="protein sequence ID" value="AAT54646.1"/>
    <property type="molecule type" value="Genomic_DNA"/>
</dbReference>
<dbReference type="RefSeq" id="NP_844885.1">
    <property type="nucleotide sequence ID" value="NC_003997.3"/>
</dbReference>
<dbReference type="RefSeq" id="WP_000218128.1">
    <property type="nucleotide sequence ID" value="NZ_WXXJ01000008.1"/>
</dbReference>
<dbReference type="RefSeq" id="YP_028595.1">
    <property type="nucleotide sequence ID" value="NC_005945.1"/>
</dbReference>
<dbReference type="SMR" id="Q81QB6"/>
<dbReference type="IntAct" id="Q81QB6">
    <property type="interactions" value="7"/>
</dbReference>
<dbReference type="STRING" id="261594.GBAA_2513"/>
<dbReference type="DNASU" id="1084066"/>
<dbReference type="GeneID" id="45022376"/>
<dbReference type="KEGG" id="ban:BA_2513"/>
<dbReference type="KEGG" id="bar:GBAA_2513"/>
<dbReference type="KEGG" id="bat:BAS2334"/>
<dbReference type="PATRIC" id="fig|198094.11.peg.2485"/>
<dbReference type="eggNOG" id="COG1012">
    <property type="taxonomic scope" value="Bacteria"/>
</dbReference>
<dbReference type="HOGENOM" id="CLU_005391_1_0_9"/>
<dbReference type="OrthoDB" id="9762913at2"/>
<dbReference type="UniPathway" id="UPA00076">
    <property type="reaction ID" value="UER00148"/>
</dbReference>
<dbReference type="Proteomes" id="UP000000427">
    <property type="component" value="Chromosome"/>
</dbReference>
<dbReference type="Proteomes" id="UP000000594">
    <property type="component" value="Chromosome"/>
</dbReference>
<dbReference type="GO" id="GO:0018478">
    <property type="term" value="F:malonate-semialdehyde dehydrogenase (acetylating) activity"/>
    <property type="evidence" value="ECO:0007669"/>
    <property type="project" value="UniProtKB-UniRule"/>
</dbReference>
<dbReference type="GO" id="GO:0004491">
    <property type="term" value="F:methylmalonate-semialdehyde dehydrogenase (acylating, NAD) activity"/>
    <property type="evidence" value="ECO:0007669"/>
    <property type="project" value="UniProtKB-UniRule"/>
</dbReference>
<dbReference type="GO" id="GO:0019310">
    <property type="term" value="P:inositol catabolic process"/>
    <property type="evidence" value="ECO:0007669"/>
    <property type="project" value="UniProtKB-UniRule"/>
</dbReference>
<dbReference type="GO" id="GO:0006210">
    <property type="term" value="P:thymine catabolic process"/>
    <property type="evidence" value="ECO:0007669"/>
    <property type="project" value="TreeGrafter"/>
</dbReference>
<dbReference type="GO" id="GO:0006574">
    <property type="term" value="P:valine catabolic process"/>
    <property type="evidence" value="ECO:0007669"/>
    <property type="project" value="TreeGrafter"/>
</dbReference>
<dbReference type="CDD" id="cd07085">
    <property type="entry name" value="ALDH_F6_MMSDH"/>
    <property type="match status" value="1"/>
</dbReference>
<dbReference type="FunFam" id="3.40.309.10:FF:000002">
    <property type="entry name" value="Methylmalonate-semialdehyde dehydrogenase (Acylating)"/>
    <property type="match status" value="1"/>
</dbReference>
<dbReference type="FunFam" id="3.40.605.10:FF:000003">
    <property type="entry name" value="Methylmalonate-semialdehyde dehydrogenase [acylating]"/>
    <property type="match status" value="1"/>
</dbReference>
<dbReference type="Gene3D" id="3.40.605.10">
    <property type="entry name" value="Aldehyde Dehydrogenase, Chain A, domain 1"/>
    <property type="match status" value="1"/>
</dbReference>
<dbReference type="Gene3D" id="3.40.309.10">
    <property type="entry name" value="Aldehyde Dehydrogenase, Chain A, domain 2"/>
    <property type="match status" value="1"/>
</dbReference>
<dbReference type="HAMAP" id="MF_01670">
    <property type="entry name" value="IolA"/>
    <property type="match status" value="1"/>
</dbReference>
<dbReference type="InterPro" id="IPR016161">
    <property type="entry name" value="Ald_DH/histidinol_DH"/>
</dbReference>
<dbReference type="InterPro" id="IPR016163">
    <property type="entry name" value="Ald_DH_C"/>
</dbReference>
<dbReference type="InterPro" id="IPR016160">
    <property type="entry name" value="Ald_DH_CS_CYS"/>
</dbReference>
<dbReference type="InterPro" id="IPR016162">
    <property type="entry name" value="Ald_DH_N"/>
</dbReference>
<dbReference type="InterPro" id="IPR015590">
    <property type="entry name" value="Aldehyde_DH_dom"/>
</dbReference>
<dbReference type="InterPro" id="IPR010061">
    <property type="entry name" value="MeMal-semiAld_DH"/>
</dbReference>
<dbReference type="InterPro" id="IPR023510">
    <property type="entry name" value="MSDH_GmP_bac"/>
</dbReference>
<dbReference type="NCBIfam" id="TIGR01722">
    <property type="entry name" value="MMSDH"/>
    <property type="match status" value="1"/>
</dbReference>
<dbReference type="PANTHER" id="PTHR43866">
    <property type="entry name" value="MALONATE-SEMIALDEHYDE DEHYDROGENASE"/>
    <property type="match status" value="1"/>
</dbReference>
<dbReference type="PANTHER" id="PTHR43866:SF4">
    <property type="entry name" value="MALONATE-SEMIALDEHYDE DEHYDROGENASE"/>
    <property type="match status" value="1"/>
</dbReference>
<dbReference type="Pfam" id="PF00171">
    <property type="entry name" value="Aldedh"/>
    <property type="match status" value="1"/>
</dbReference>
<dbReference type="SUPFAM" id="SSF53720">
    <property type="entry name" value="ALDH-like"/>
    <property type="match status" value="1"/>
</dbReference>
<dbReference type="PROSITE" id="PS00070">
    <property type="entry name" value="ALDEHYDE_DEHYDR_CYS"/>
    <property type="match status" value="1"/>
</dbReference>
<protein>
    <recommendedName>
        <fullName evidence="1">Malonate-semialdehyde dehydrogenase 2</fullName>
        <shortName evidence="1">MSA dehydrogenase 2</shortName>
        <ecNumber evidence="1">1.2.1.27</ecNumber>
    </recommendedName>
    <alternativeName>
        <fullName evidence="1">Methylmalonate-semialdehyde dehydrogenase 2</fullName>
        <shortName evidence="1">MMSA dehydrogenase 2</shortName>
        <shortName evidence="1">MSDH 2</shortName>
    </alternativeName>
</protein>
<keyword id="KW-0520">NAD</keyword>
<keyword id="KW-0560">Oxidoreductase</keyword>
<keyword id="KW-1185">Reference proteome</keyword>
<sequence>MTVQTAQIVKNYIGGEWVESISTKMEAVYNPATGEVIAQVPLSTKVDVEQAVLAANEAFKSWSKTAVPRRARILFKYQQLLVDNWEELAKLITIENGKSYNEAYGEVLRGIECVEFAAGAPTLMMGKQLPDIATGIESGMYRYPIGVIGGITPFNFPMMVPCWMFPLAIACGNTFVLKPSERTPLLAARLAELAEEAGLPKGVLNIVNGAHDVVNGLLEHKLVKAISFVGSQPVAEYVYKKGTENLKRVQALAGAKNHSIVLNDANLELATKQIISAAFGSAGERCMAASVVTVEEEIADQLVERLVAEANKIVIGNGLDEDVFLGPVIRDNHKERTIGYIDSGVEQGATLVRDGREDTAVKGAGYFVGPTIFDHVTKEMKIWQDEIFAPVLSIVRVKSLDEAIEIANESRFANGACIYTDSGASVRQFRETIESGMLGVNVGVPAPMAFFPFSGWKDSFYGDLHANGTDGVEFYTRKKMLTSRWEK</sequence>
<proteinExistence type="inferred from homology"/>
<reference key="1">
    <citation type="journal article" date="2003" name="Nature">
        <title>The genome sequence of Bacillus anthracis Ames and comparison to closely related bacteria.</title>
        <authorList>
            <person name="Read T.D."/>
            <person name="Peterson S.N."/>
            <person name="Tourasse N.J."/>
            <person name="Baillie L.W."/>
            <person name="Paulsen I.T."/>
            <person name="Nelson K.E."/>
            <person name="Tettelin H."/>
            <person name="Fouts D.E."/>
            <person name="Eisen J.A."/>
            <person name="Gill S.R."/>
            <person name="Holtzapple E.K."/>
            <person name="Okstad O.A."/>
            <person name="Helgason E."/>
            <person name="Rilstone J."/>
            <person name="Wu M."/>
            <person name="Kolonay J.F."/>
            <person name="Beanan M.J."/>
            <person name="Dodson R.J."/>
            <person name="Brinkac L.M."/>
            <person name="Gwinn M.L."/>
            <person name="DeBoy R.T."/>
            <person name="Madpu R."/>
            <person name="Daugherty S.C."/>
            <person name="Durkin A.S."/>
            <person name="Haft D.H."/>
            <person name="Nelson W.C."/>
            <person name="Peterson J.D."/>
            <person name="Pop M."/>
            <person name="Khouri H.M."/>
            <person name="Radune D."/>
            <person name="Benton J.L."/>
            <person name="Mahamoud Y."/>
            <person name="Jiang L."/>
            <person name="Hance I.R."/>
            <person name="Weidman J.F."/>
            <person name="Berry K.J."/>
            <person name="Plaut R.D."/>
            <person name="Wolf A.M."/>
            <person name="Watkins K.L."/>
            <person name="Nierman W.C."/>
            <person name="Hazen A."/>
            <person name="Cline R.T."/>
            <person name="Redmond C."/>
            <person name="Thwaite J.E."/>
            <person name="White O."/>
            <person name="Salzberg S.L."/>
            <person name="Thomason B."/>
            <person name="Friedlander A.M."/>
            <person name="Koehler T.M."/>
            <person name="Hanna P.C."/>
            <person name="Kolstoe A.-B."/>
            <person name="Fraser C.M."/>
        </authorList>
    </citation>
    <scope>NUCLEOTIDE SEQUENCE [LARGE SCALE GENOMIC DNA]</scope>
    <source>
        <strain>Ames / isolate Porton</strain>
    </source>
</reference>
<reference key="2">
    <citation type="submission" date="2004-01" db="EMBL/GenBank/DDBJ databases">
        <title>Complete genome sequence of Bacillus anthracis Sterne.</title>
        <authorList>
            <person name="Brettin T.S."/>
            <person name="Bruce D."/>
            <person name="Challacombe J.F."/>
            <person name="Gilna P."/>
            <person name="Han C."/>
            <person name="Hill K."/>
            <person name="Hitchcock P."/>
            <person name="Jackson P."/>
            <person name="Keim P."/>
            <person name="Longmire J."/>
            <person name="Lucas S."/>
            <person name="Okinaka R."/>
            <person name="Richardson P."/>
            <person name="Rubin E."/>
            <person name="Tice H."/>
        </authorList>
    </citation>
    <scope>NUCLEOTIDE SEQUENCE [LARGE SCALE GENOMIC DNA]</scope>
    <source>
        <strain>Sterne</strain>
    </source>
</reference>
<reference key="3">
    <citation type="journal article" date="2009" name="J. Bacteriol.">
        <title>The complete genome sequence of Bacillus anthracis Ames 'Ancestor'.</title>
        <authorList>
            <person name="Ravel J."/>
            <person name="Jiang L."/>
            <person name="Stanley S.T."/>
            <person name="Wilson M.R."/>
            <person name="Decker R.S."/>
            <person name="Read T.D."/>
            <person name="Worsham P."/>
            <person name="Keim P.S."/>
            <person name="Salzberg S.L."/>
            <person name="Fraser-Liggett C.M."/>
            <person name="Rasko D.A."/>
        </authorList>
    </citation>
    <scope>NUCLEOTIDE SEQUENCE [LARGE SCALE GENOMIC DNA]</scope>
    <source>
        <strain>Ames ancestor</strain>
    </source>
</reference>
<gene>
    <name evidence="1" type="primary">iolA2</name>
    <name type="ordered locus">BA_2513</name>
    <name type="ordered locus">GBAA_2513</name>
    <name type="ordered locus">BAS2334</name>
</gene>
<evidence type="ECO:0000255" key="1">
    <source>
        <dbReference type="HAMAP-Rule" id="MF_01670"/>
    </source>
</evidence>